<organism>
    <name type="scientific">Bacteroides thetaiotaomicron (strain ATCC 29148 / DSM 2079 / JCM 5827 / CCUG 10774 / NCTC 10582 / VPI-5482 / E50)</name>
    <dbReference type="NCBI Taxonomy" id="226186"/>
    <lineage>
        <taxon>Bacteria</taxon>
        <taxon>Pseudomonadati</taxon>
        <taxon>Bacteroidota</taxon>
        <taxon>Bacteroidia</taxon>
        <taxon>Bacteroidales</taxon>
        <taxon>Bacteroidaceae</taxon>
        <taxon>Bacteroides</taxon>
    </lineage>
</organism>
<protein>
    <recommendedName>
        <fullName evidence="1">Co-chaperonin GroES</fullName>
    </recommendedName>
    <alternativeName>
        <fullName evidence="1">10 kDa chaperonin</fullName>
    </alternativeName>
    <alternativeName>
        <fullName evidence="1">Chaperonin-10</fullName>
        <shortName evidence="1">Cpn10</shortName>
    </alternativeName>
</protein>
<dbReference type="EMBL" id="AE015928">
    <property type="protein sequence ID" value="AAO76937.1"/>
    <property type="molecule type" value="Genomic_DNA"/>
</dbReference>
<dbReference type="RefSeq" id="NP_810743.1">
    <property type="nucleotide sequence ID" value="NC_004663.1"/>
</dbReference>
<dbReference type="RefSeq" id="WP_010539043.1">
    <property type="nucleotide sequence ID" value="NZ_UYXG01000014.1"/>
</dbReference>
<dbReference type="SMR" id="Q8A6P7"/>
<dbReference type="FunCoup" id="Q8A6P7">
    <property type="interactions" value="528"/>
</dbReference>
<dbReference type="STRING" id="226186.BT_1830"/>
<dbReference type="PaxDb" id="226186-BT_1830"/>
<dbReference type="EnsemblBacteria" id="AAO76937">
    <property type="protein sequence ID" value="AAO76937"/>
    <property type="gene ID" value="BT_1830"/>
</dbReference>
<dbReference type="KEGG" id="bth:BT_1830"/>
<dbReference type="PATRIC" id="fig|226186.12.peg.1879"/>
<dbReference type="eggNOG" id="COG0234">
    <property type="taxonomic scope" value="Bacteria"/>
</dbReference>
<dbReference type="HOGENOM" id="CLU_132825_2_0_10"/>
<dbReference type="InParanoid" id="Q8A6P7"/>
<dbReference type="OrthoDB" id="9806791at2"/>
<dbReference type="Proteomes" id="UP000001414">
    <property type="component" value="Chromosome"/>
</dbReference>
<dbReference type="GO" id="GO:0005737">
    <property type="term" value="C:cytoplasm"/>
    <property type="evidence" value="ECO:0007669"/>
    <property type="project" value="UniProtKB-SubCell"/>
</dbReference>
<dbReference type="GO" id="GO:0005524">
    <property type="term" value="F:ATP binding"/>
    <property type="evidence" value="ECO:0007669"/>
    <property type="project" value="InterPro"/>
</dbReference>
<dbReference type="GO" id="GO:0046872">
    <property type="term" value="F:metal ion binding"/>
    <property type="evidence" value="ECO:0000318"/>
    <property type="project" value="GO_Central"/>
</dbReference>
<dbReference type="GO" id="GO:0044183">
    <property type="term" value="F:protein folding chaperone"/>
    <property type="evidence" value="ECO:0007669"/>
    <property type="project" value="InterPro"/>
</dbReference>
<dbReference type="GO" id="GO:0051087">
    <property type="term" value="F:protein-folding chaperone binding"/>
    <property type="evidence" value="ECO:0000318"/>
    <property type="project" value="GO_Central"/>
</dbReference>
<dbReference type="GO" id="GO:0051082">
    <property type="term" value="F:unfolded protein binding"/>
    <property type="evidence" value="ECO:0000318"/>
    <property type="project" value="GO_Central"/>
</dbReference>
<dbReference type="GO" id="GO:0051085">
    <property type="term" value="P:chaperone cofactor-dependent protein refolding"/>
    <property type="evidence" value="ECO:0000318"/>
    <property type="project" value="GO_Central"/>
</dbReference>
<dbReference type="CDD" id="cd00320">
    <property type="entry name" value="cpn10"/>
    <property type="match status" value="1"/>
</dbReference>
<dbReference type="FunFam" id="2.30.33.40:FF:000004">
    <property type="entry name" value="10 kDa chaperonin"/>
    <property type="match status" value="1"/>
</dbReference>
<dbReference type="Gene3D" id="2.30.33.40">
    <property type="entry name" value="GroES chaperonin"/>
    <property type="match status" value="1"/>
</dbReference>
<dbReference type="HAMAP" id="MF_00580">
    <property type="entry name" value="CH10"/>
    <property type="match status" value="1"/>
</dbReference>
<dbReference type="InterPro" id="IPR020818">
    <property type="entry name" value="Chaperonin_GroES"/>
</dbReference>
<dbReference type="InterPro" id="IPR037124">
    <property type="entry name" value="Chaperonin_GroES_sf"/>
</dbReference>
<dbReference type="InterPro" id="IPR011032">
    <property type="entry name" value="GroES-like_sf"/>
</dbReference>
<dbReference type="NCBIfam" id="NF001531">
    <property type="entry name" value="PRK00364.2-2"/>
    <property type="match status" value="1"/>
</dbReference>
<dbReference type="NCBIfam" id="NF001533">
    <property type="entry name" value="PRK00364.2-4"/>
    <property type="match status" value="1"/>
</dbReference>
<dbReference type="PANTHER" id="PTHR10772">
    <property type="entry name" value="10 KDA HEAT SHOCK PROTEIN"/>
    <property type="match status" value="1"/>
</dbReference>
<dbReference type="PANTHER" id="PTHR10772:SF58">
    <property type="entry name" value="CO-CHAPERONIN GROES"/>
    <property type="match status" value="1"/>
</dbReference>
<dbReference type="Pfam" id="PF00166">
    <property type="entry name" value="Cpn10"/>
    <property type="match status" value="1"/>
</dbReference>
<dbReference type="PRINTS" id="PR00297">
    <property type="entry name" value="CHAPERONIN10"/>
</dbReference>
<dbReference type="SMART" id="SM00883">
    <property type="entry name" value="Cpn10"/>
    <property type="match status" value="1"/>
</dbReference>
<dbReference type="SUPFAM" id="SSF50129">
    <property type="entry name" value="GroES-like"/>
    <property type="match status" value="1"/>
</dbReference>
<accession>Q8A6P7</accession>
<proteinExistence type="inferred from homology"/>
<comment type="function">
    <text evidence="1">Together with the chaperonin GroEL, plays an essential role in assisting protein folding. The GroEL-GroES system forms a nano-cage that allows encapsulation of the non-native substrate proteins and provides a physical environment optimized to promote and accelerate protein folding. GroES binds to the apical surface of the GroEL ring, thereby capping the opening of the GroEL channel.</text>
</comment>
<comment type="subunit">
    <text evidence="1">Heptamer of 7 subunits arranged in a ring. Interacts with the chaperonin GroEL.</text>
</comment>
<comment type="subcellular location">
    <subcellularLocation>
        <location evidence="1">Cytoplasm</location>
    </subcellularLocation>
</comment>
<comment type="similarity">
    <text evidence="1">Belongs to the GroES chaperonin family.</text>
</comment>
<name>CH10_BACTN</name>
<keyword id="KW-0143">Chaperone</keyword>
<keyword id="KW-0963">Cytoplasm</keyword>
<keyword id="KW-1185">Reference proteome</keyword>
<feature type="chain" id="PRO_1000025211" description="Co-chaperonin GroES">
    <location>
        <begin position="1"/>
        <end position="90"/>
    </location>
</feature>
<evidence type="ECO:0000255" key="1">
    <source>
        <dbReference type="HAMAP-Rule" id="MF_00580"/>
    </source>
</evidence>
<gene>
    <name evidence="1" type="primary">groES</name>
    <name evidence="1" type="synonym">groS</name>
    <name type="ordered locus">BT_1830</name>
</gene>
<sequence>MNIKPLADRVLILPAPAEEKTIGGIIIPDTAKEKPLKGEVVAVGHGTKDEEMVLKVGDTVLYGKYAGTELEVEGTKYLIMRQSDVLAILG</sequence>
<reference key="1">
    <citation type="journal article" date="2003" name="Science">
        <title>A genomic view of the human-Bacteroides thetaiotaomicron symbiosis.</title>
        <authorList>
            <person name="Xu J."/>
            <person name="Bjursell M.K."/>
            <person name="Himrod J."/>
            <person name="Deng S."/>
            <person name="Carmichael L.K."/>
            <person name="Chiang H.C."/>
            <person name="Hooper L.V."/>
            <person name="Gordon J.I."/>
        </authorList>
    </citation>
    <scope>NUCLEOTIDE SEQUENCE [LARGE SCALE GENOMIC DNA]</scope>
    <source>
        <strain>ATCC 29148 / DSM 2079 / JCM 5827 / CCUG 10774 / NCTC 10582 / VPI-5482 / E50</strain>
    </source>
</reference>